<protein>
    <recommendedName>
        <fullName>Protein OPG097</fullName>
    </recommendedName>
    <alternativeName>
        <fullName>Protein L3</fullName>
    </alternativeName>
</protein>
<accession>P0DSZ2</accession>
<accession>P33042</accession>
<keyword id="KW-1035">Host cytoplasm</keyword>
<keyword id="KW-0426">Late protein</keyword>
<keyword id="KW-0946">Virion</keyword>
<proteinExistence type="inferred from homology"/>
<dbReference type="EMBL" id="L22579">
    <property type="protein sequence ID" value="AAA60823.1"/>
    <property type="molecule type" value="Genomic_DNA"/>
</dbReference>
<dbReference type="PIR" id="T28513">
    <property type="entry name" value="T28513"/>
</dbReference>
<dbReference type="RefSeq" id="NP_042119.1">
    <property type="nucleotide sequence ID" value="NC_001611.1"/>
</dbReference>
<dbReference type="GeneID" id="1486472"/>
<dbReference type="KEGG" id="vg:1486472"/>
<dbReference type="Proteomes" id="UP000119805">
    <property type="component" value="Segment"/>
</dbReference>
<dbReference type="GO" id="GO:0030430">
    <property type="term" value="C:host cell cytoplasm"/>
    <property type="evidence" value="ECO:0007669"/>
    <property type="project" value="UniProtKB-SubCell"/>
</dbReference>
<dbReference type="GO" id="GO:0044423">
    <property type="term" value="C:virion component"/>
    <property type="evidence" value="ECO:0007669"/>
    <property type="project" value="UniProtKB-KW"/>
</dbReference>
<dbReference type="InterPro" id="IPR005007">
    <property type="entry name" value="Poxvirus_L3/FP4"/>
</dbReference>
<dbReference type="Pfam" id="PF03339">
    <property type="entry name" value="Pox_L3_FP4"/>
    <property type="match status" value="1"/>
</dbReference>
<sequence length="349" mass="40460">MNTRTDVTNDNIDKNPTKRGNKNIPGRNERFNDRNRFNNDGNNRPRLQPSPPPRQDNKCREENGDFINIRLCAYEKEYCNDGYLSPAYYMLKQVDDEEMSCWSELSSLVRSKKAVGFPLLKAAKRISHGSMLYFEQFKNSKVVRLTPQVKCLNDTVIFQTVVILYSMYKRDIYSNEFCFDLVSIPRTNIVFSVNQLMFNICTDILVVLSICGNRLYRTNLPQSCYLNFIHGHETIACRGYEHSNYFFEWLIKNHLSLLTKQTMDILKVKKKYATGAPVNRLLEPGTLVYVPKEDYYFIGISLTDVSISDNVRVLFSTDGIVLEIEDFNIKHLFMAGEMFVRSQSSTIIV</sequence>
<comment type="function">
    <text evidence="1">Might be required to be present in the virion for transcription of early genes after primo infection.</text>
</comment>
<comment type="subcellular location">
    <subcellularLocation>
        <location evidence="1">Virion</location>
    </subcellularLocation>
    <subcellularLocation>
        <location evidence="1">Host cytoplasm</location>
    </subcellularLocation>
    <text evidence="1">Localizes in cytoplasmic virus factories and present in the virion core.</text>
</comment>
<comment type="induction">
    <text evidence="1">Expressed in the late phase of the viral replicative cycle.</text>
</comment>
<comment type="similarity">
    <text evidence="3">Belongs to the orthopoxvirus OPG097 family.</text>
</comment>
<name>PG097_VARV</name>
<gene>
    <name type="primary">OPG097</name>
    <name type="ORF">L3L</name>
    <name type="ORF">M3L</name>
</gene>
<reference key="1">
    <citation type="journal article" date="1993" name="Nature">
        <title>Potential virulence determinants in terminal regions of variola smallpox virus genome.</title>
        <authorList>
            <person name="Massung R.F."/>
            <person name="Esposito J.J."/>
            <person name="Liu L.I."/>
            <person name="Qi J."/>
            <person name="Utterback T.R."/>
            <person name="Knight J.C."/>
            <person name="Aubin L."/>
            <person name="Yuran T.E."/>
            <person name="Parsons J.M."/>
            <person name="Loparev V.N."/>
            <person name="Selivanov N.A."/>
            <person name="Cavallaro K.F."/>
            <person name="Kerlavage A.R."/>
            <person name="Mahy B.W.J."/>
            <person name="Venter J.C."/>
        </authorList>
    </citation>
    <scope>NUCLEOTIDE SEQUENCE [GENOMIC DNA]</scope>
    <source>
        <strain>Bangladesh-1975</strain>
    </source>
</reference>
<feature type="chain" id="PRO_0000448206" description="Protein OPG097">
    <location>
        <begin position="1"/>
        <end position="349"/>
    </location>
</feature>
<feature type="region of interest" description="Disordered" evidence="2">
    <location>
        <begin position="1"/>
        <end position="60"/>
    </location>
</feature>
<feature type="compositionally biased region" description="Polar residues" evidence="2">
    <location>
        <begin position="1"/>
        <end position="10"/>
    </location>
</feature>
<feature type="compositionally biased region" description="Basic and acidic residues" evidence="2">
    <location>
        <begin position="27"/>
        <end position="37"/>
    </location>
</feature>
<feature type="compositionally biased region" description="Low complexity" evidence="2">
    <location>
        <begin position="38"/>
        <end position="47"/>
    </location>
</feature>
<organism>
    <name type="scientific">Variola virus</name>
    <dbReference type="NCBI Taxonomy" id="10255"/>
    <lineage>
        <taxon>Viruses</taxon>
        <taxon>Varidnaviria</taxon>
        <taxon>Bamfordvirae</taxon>
        <taxon>Nucleocytoviricota</taxon>
        <taxon>Pokkesviricetes</taxon>
        <taxon>Chitovirales</taxon>
        <taxon>Poxviridae</taxon>
        <taxon>Chordopoxvirinae</taxon>
        <taxon>Orthopoxvirus</taxon>
    </lineage>
</organism>
<organismHost>
    <name type="scientific">Homo sapiens</name>
    <name type="common">Human</name>
    <dbReference type="NCBI Taxonomy" id="9606"/>
</organismHost>
<evidence type="ECO:0000250" key="1">
    <source>
        <dbReference type="UniProtKB" id="P07614"/>
    </source>
</evidence>
<evidence type="ECO:0000256" key="2">
    <source>
        <dbReference type="SAM" id="MobiDB-lite"/>
    </source>
</evidence>
<evidence type="ECO:0000305" key="3"/>